<evidence type="ECO:0000250" key="1"/>
<evidence type="ECO:0000255" key="2"/>
<evidence type="ECO:0000269" key="3">
    <source>
    </source>
</evidence>
<evidence type="ECO:0000305" key="4"/>
<reference key="1">
    <citation type="journal article" date="2005" name="Genes Immun.">
        <title>Identification, characterization, and evolution of a primate beta-defensin gene cluster.</title>
        <authorList>
            <person name="Radhakrishnan Y."/>
            <person name="Hamil K.G."/>
            <person name="Yenugu S."/>
            <person name="Young S.L."/>
            <person name="French F.S."/>
            <person name="Hall S.H."/>
        </authorList>
    </citation>
    <scope>NUCLEOTIDE SEQUENCE [MRNA]</scope>
    <scope>TISSUE SPECIFICITY</scope>
    <source>
        <tissue>Testis</tissue>
    </source>
</reference>
<reference key="2">
    <citation type="journal article" date="2001" name="Nature">
        <title>The DNA sequence and comparative analysis of human chromosome 20.</title>
        <authorList>
            <person name="Deloukas P."/>
            <person name="Matthews L.H."/>
            <person name="Ashurst J.L."/>
            <person name="Burton J."/>
            <person name="Gilbert J.G.R."/>
            <person name="Jones M."/>
            <person name="Stavrides G."/>
            <person name="Almeida J.P."/>
            <person name="Babbage A.K."/>
            <person name="Bagguley C.L."/>
            <person name="Bailey J."/>
            <person name="Barlow K.F."/>
            <person name="Bates K.N."/>
            <person name="Beard L.M."/>
            <person name="Beare D.M."/>
            <person name="Beasley O.P."/>
            <person name="Bird C.P."/>
            <person name="Blakey S.E."/>
            <person name="Bridgeman A.M."/>
            <person name="Brown A.J."/>
            <person name="Buck D."/>
            <person name="Burrill W.D."/>
            <person name="Butler A.P."/>
            <person name="Carder C."/>
            <person name="Carter N.P."/>
            <person name="Chapman J.C."/>
            <person name="Clamp M."/>
            <person name="Clark G."/>
            <person name="Clark L.N."/>
            <person name="Clark S.Y."/>
            <person name="Clee C.M."/>
            <person name="Clegg S."/>
            <person name="Cobley V.E."/>
            <person name="Collier R.E."/>
            <person name="Connor R.E."/>
            <person name="Corby N.R."/>
            <person name="Coulson A."/>
            <person name="Coville G.J."/>
            <person name="Deadman R."/>
            <person name="Dhami P.D."/>
            <person name="Dunn M."/>
            <person name="Ellington A.G."/>
            <person name="Frankland J.A."/>
            <person name="Fraser A."/>
            <person name="French L."/>
            <person name="Garner P."/>
            <person name="Grafham D.V."/>
            <person name="Griffiths C."/>
            <person name="Griffiths M.N.D."/>
            <person name="Gwilliam R."/>
            <person name="Hall R.E."/>
            <person name="Hammond S."/>
            <person name="Harley J.L."/>
            <person name="Heath P.D."/>
            <person name="Ho S."/>
            <person name="Holden J.L."/>
            <person name="Howden P.J."/>
            <person name="Huckle E."/>
            <person name="Hunt A.R."/>
            <person name="Hunt S.E."/>
            <person name="Jekosch K."/>
            <person name="Johnson C.M."/>
            <person name="Johnson D."/>
            <person name="Kay M.P."/>
            <person name="Kimberley A.M."/>
            <person name="King A."/>
            <person name="Knights A."/>
            <person name="Laird G.K."/>
            <person name="Lawlor S."/>
            <person name="Lehvaeslaiho M.H."/>
            <person name="Leversha M.A."/>
            <person name="Lloyd C."/>
            <person name="Lloyd D.M."/>
            <person name="Lovell J.D."/>
            <person name="Marsh V.L."/>
            <person name="Martin S.L."/>
            <person name="McConnachie L.J."/>
            <person name="McLay K."/>
            <person name="McMurray A.A."/>
            <person name="Milne S.A."/>
            <person name="Mistry D."/>
            <person name="Moore M.J.F."/>
            <person name="Mullikin J.C."/>
            <person name="Nickerson T."/>
            <person name="Oliver K."/>
            <person name="Parker A."/>
            <person name="Patel R."/>
            <person name="Pearce T.A.V."/>
            <person name="Peck A.I."/>
            <person name="Phillimore B.J.C.T."/>
            <person name="Prathalingam S.R."/>
            <person name="Plumb R.W."/>
            <person name="Ramsay H."/>
            <person name="Rice C.M."/>
            <person name="Ross M.T."/>
            <person name="Scott C.E."/>
            <person name="Sehra H.K."/>
            <person name="Shownkeen R."/>
            <person name="Sims S."/>
            <person name="Skuce C.D."/>
            <person name="Smith M.L."/>
            <person name="Soderlund C."/>
            <person name="Steward C.A."/>
            <person name="Sulston J.E."/>
            <person name="Swann R.M."/>
            <person name="Sycamore N."/>
            <person name="Taylor R."/>
            <person name="Tee L."/>
            <person name="Thomas D.W."/>
            <person name="Thorpe A."/>
            <person name="Tracey A."/>
            <person name="Tromans A.C."/>
            <person name="Vaudin M."/>
            <person name="Wall M."/>
            <person name="Wallis J.M."/>
            <person name="Whitehead S.L."/>
            <person name="Whittaker P."/>
            <person name="Willey D.L."/>
            <person name="Williams L."/>
            <person name="Williams S.A."/>
            <person name="Wilming L."/>
            <person name="Wray P.W."/>
            <person name="Hubbard T."/>
            <person name="Durbin R.M."/>
            <person name="Bentley D.R."/>
            <person name="Beck S."/>
            <person name="Rogers J."/>
        </authorList>
    </citation>
    <scope>NUCLEOTIDE SEQUENCE [LARGE SCALE GENOMIC DNA]</scope>
</reference>
<reference key="3">
    <citation type="journal article" date="2004" name="Genome Res.">
        <title>The status, quality, and expansion of the NIH full-length cDNA project: the Mammalian Gene Collection (MGC).</title>
        <authorList>
            <consortium name="The MGC Project Team"/>
        </authorList>
    </citation>
    <scope>NUCLEOTIDE SEQUENCE [LARGE SCALE MRNA]</scope>
</reference>
<feature type="signal peptide" evidence="2">
    <location>
        <begin position="1"/>
        <end position="15"/>
    </location>
</feature>
<feature type="chain" id="PRO_0000006991" description="Beta-defensin 121">
    <location>
        <begin position="16"/>
        <end position="76"/>
    </location>
</feature>
<feature type="disulfide bond" evidence="1">
    <location>
        <begin position="23"/>
        <end position="50"/>
    </location>
</feature>
<feature type="disulfide bond" evidence="1">
    <location>
        <begin position="30"/>
        <end position="44"/>
    </location>
</feature>
<feature type="disulfide bond" evidence="1">
    <location>
        <begin position="34"/>
        <end position="51"/>
    </location>
</feature>
<gene>
    <name type="primary">DEFB121</name>
    <name type="synonym">DEFB21</name>
</gene>
<organism>
    <name type="scientific">Homo sapiens</name>
    <name type="common">Human</name>
    <dbReference type="NCBI Taxonomy" id="9606"/>
    <lineage>
        <taxon>Eukaryota</taxon>
        <taxon>Metazoa</taxon>
        <taxon>Chordata</taxon>
        <taxon>Craniata</taxon>
        <taxon>Vertebrata</taxon>
        <taxon>Euteleostomi</taxon>
        <taxon>Mammalia</taxon>
        <taxon>Eutheria</taxon>
        <taxon>Euarchontoglires</taxon>
        <taxon>Primates</taxon>
        <taxon>Haplorrhini</taxon>
        <taxon>Catarrhini</taxon>
        <taxon>Hominidae</taxon>
        <taxon>Homo</taxon>
    </lineage>
</organism>
<proteinExistence type="evidence at protein level"/>
<sequence length="76" mass="8456">MKLLLLLLTVTLLLAQVTPVMKCWGKSGRCRTTCKESEVYYILCKTEAKCCVDPKYVPVKPKLTDTNTSLESTSAV</sequence>
<accession>Q5J5C9</accession>
<accession>A1L4N1</accession>
<keyword id="KW-0044">Antibiotic</keyword>
<keyword id="KW-0929">Antimicrobial</keyword>
<keyword id="KW-0211">Defensin</keyword>
<keyword id="KW-1015">Disulfide bond</keyword>
<keyword id="KW-1185">Reference proteome</keyword>
<keyword id="KW-0964">Secreted</keyword>
<keyword id="KW-0732">Signal</keyword>
<protein>
    <recommendedName>
        <fullName>Beta-defensin 121</fullName>
    </recommendedName>
    <alternativeName>
        <fullName>Beta-defensin 21</fullName>
        <shortName>DEFB-21</shortName>
    </alternativeName>
    <alternativeName>
        <fullName>Defensin, beta 121</fullName>
    </alternativeName>
</protein>
<name>DB121_HUMAN</name>
<dbReference type="EMBL" id="AY501000">
    <property type="protein sequence ID" value="AAS87294.1"/>
    <property type="molecule type" value="mRNA"/>
</dbReference>
<dbReference type="EMBL" id="AL121751">
    <property type="status" value="NOT_ANNOTATED_CDS"/>
    <property type="molecule type" value="Genomic_DNA"/>
</dbReference>
<dbReference type="EMBL" id="BC130607">
    <property type="protein sequence ID" value="AAI30608.1"/>
    <property type="molecule type" value="mRNA"/>
</dbReference>
<dbReference type="EMBL" id="BC130609">
    <property type="protein sequence ID" value="AAI30610.1"/>
    <property type="molecule type" value="mRNA"/>
</dbReference>
<dbReference type="CCDS" id="CCDS33456.1"/>
<dbReference type="RefSeq" id="NP_001011878.1">
    <property type="nucleotide sequence ID" value="NM_001011878.3"/>
</dbReference>
<dbReference type="SMR" id="Q5J5C9"/>
<dbReference type="BioGRID" id="128847">
    <property type="interactions" value="32"/>
</dbReference>
<dbReference type="FunCoup" id="Q5J5C9">
    <property type="interactions" value="12"/>
</dbReference>
<dbReference type="IntAct" id="Q5J5C9">
    <property type="interactions" value="19"/>
</dbReference>
<dbReference type="STRING" id="9606.ENSP00000417128"/>
<dbReference type="iPTMnet" id="Q5J5C9"/>
<dbReference type="PhosphoSitePlus" id="Q5J5C9"/>
<dbReference type="BioMuta" id="DEFB121"/>
<dbReference type="DMDM" id="61212937"/>
<dbReference type="MassIVE" id="Q5J5C9"/>
<dbReference type="PaxDb" id="9606-ENSP00000417128"/>
<dbReference type="PeptideAtlas" id="Q5J5C9"/>
<dbReference type="ProteomicsDB" id="62979"/>
<dbReference type="Antibodypedia" id="49719">
    <property type="antibodies" value="70 antibodies from 17 providers"/>
</dbReference>
<dbReference type="DNASU" id="245934"/>
<dbReference type="Ensembl" id="ENST00000376314.3">
    <property type="protein sequence ID" value="ENSP00000417128.1"/>
    <property type="gene ID" value="ENSG00000204548.4"/>
</dbReference>
<dbReference type="GeneID" id="245934"/>
<dbReference type="KEGG" id="hsa:245934"/>
<dbReference type="MANE-Select" id="ENST00000376314.3">
    <property type="protein sequence ID" value="ENSP00000417128.1"/>
    <property type="RefSeq nucleotide sequence ID" value="NM_001011878.3"/>
    <property type="RefSeq protein sequence ID" value="NP_001011878.1"/>
</dbReference>
<dbReference type="UCSC" id="uc002wvv.3">
    <property type="organism name" value="human"/>
</dbReference>
<dbReference type="AGR" id="HGNC:18101"/>
<dbReference type="CTD" id="245934"/>
<dbReference type="DisGeNET" id="245934"/>
<dbReference type="GeneCards" id="DEFB121"/>
<dbReference type="HGNC" id="HGNC:18101">
    <property type="gene designation" value="DEFB121"/>
</dbReference>
<dbReference type="HPA" id="ENSG00000204548">
    <property type="expression patterns" value="Tissue enriched (epididymis)"/>
</dbReference>
<dbReference type="MIM" id="616075">
    <property type="type" value="gene"/>
</dbReference>
<dbReference type="neXtProt" id="NX_Q5J5C9"/>
<dbReference type="OpenTargets" id="ENSG00000204548"/>
<dbReference type="PharmGKB" id="PA38497"/>
<dbReference type="VEuPathDB" id="HostDB:ENSG00000204548"/>
<dbReference type="eggNOG" id="ENOG502TDXP">
    <property type="taxonomic scope" value="Eukaryota"/>
</dbReference>
<dbReference type="GeneTree" id="ENSGT00730000111628"/>
<dbReference type="HOGENOM" id="CLU_181906_2_1_1"/>
<dbReference type="InParanoid" id="Q5J5C9"/>
<dbReference type="OMA" id="TPAMKCW"/>
<dbReference type="OrthoDB" id="9534975at2759"/>
<dbReference type="PAN-GO" id="Q5J5C9">
    <property type="GO annotations" value="0 GO annotations based on evolutionary models"/>
</dbReference>
<dbReference type="PhylomeDB" id="Q5J5C9"/>
<dbReference type="PathwayCommons" id="Q5J5C9"/>
<dbReference type="Reactome" id="R-HSA-1461957">
    <property type="pathway name" value="Beta defensins"/>
</dbReference>
<dbReference type="Reactome" id="R-HSA-1461973">
    <property type="pathway name" value="Defensins"/>
</dbReference>
<dbReference type="SignaLink" id="Q5J5C9"/>
<dbReference type="BioGRID-ORCS" id="245934">
    <property type="hits" value="19 hits in 1110 CRISPR screens"/>
</dbReference>
<dbReference type="GenomeRNAi" id="245934"/>
<dbReference type="Pharos" id="Q5J5C9">
    <property type="development level" value="Tdark"/>
</dbReference>
<dbReference type="PRO" id="PR:Q5J5C9"/>
<dbReference type="Proteomes" id="UP000005640">
    <property type="component" value="Chromosome 20"/>
</dbReference>
<dbReference type="RNAct" id="Q5J5C9">
    <property type="molecule type" value="protein"/>
</dbReference>
<dbReference type="Bgee" id="ENSG00000204548">
    <property type="expression patterns" value="Expressed in right testis and 12 other cell types or tissues"/>
</dbReference>
<dbReference type="ExpressionAtlas" id="Q5J5C9">
    <property type="expression patterns" value="baseline and differential"/>
</dbReference>
<dbReference type="GO" id="GO:0005576">
    <property type="term" value="C:extracellular region"/>
    <property type="evidence" value="ECO:0007669"/>
    <property type="project" value="UniProtKB-SubCell"/>
</dbReference>
<dbReference type="GO" id="GO:0050829">
    <property type="term" value="P:defense response to Gram-negative bacterium"/>
    <property type="evidence" value="ECO:0007669"/>
    <property type="project" value="UniProtKB-ARBA"/>
</dbReference>
<dbReference type="GO" id="GO:0045087">
    <property type="term" value="P:innate immune response"/>
    <property type="evidence" value="ECO:0007669"/>
    <property type="project" value="InterPro"/>
</dbReference>
<dbReference type="Gene3D" id="3.10.360.10">
    <property type="entry name" value="Antimicrobial Peptide, Beta-defensin 2, Chain A"/>
    <property type="match status" value="1"/>
</dbReference>
<dbReference type="InterPro" id="IPR050544">
    <property type="entry name" value="Beta-defensin"/>
</dbReference>
<dbReference type="InterPro" id="IPR025933">
    <property type="entry name" value="Beta_defensin_dom"/>
</dbReference>
<dbReference type="PANTHER" id="PTHR15001:SF8">
    <property type="entry name" value="BETA-DEFENSIN 121"/>
    <property type="match status" value="1"/>
</dbReference>
<dbReference type="PANTHER" id="PTHR15001">
    <property type="entry name" value="BETA-DEFENSIN 123-RELATED"/>
    <property type="match status" value="1"/>
</dbReference>
<dbReference type="Pfam" id="PF13841">
    <property type="entry name" value="Defensin_beta_2"/>
    <property type="match status" value="1"/>
</dbReference>
<comment type="function">
    <text evidence="4">Has antibacterial activity.</text>
</comment>
<comment type="interaction">
    <interactant intactId="EBI-10244198">
        <id>Q5J5C9</id>
    </interactant>
    <interactant intactId="EBI-525714">
        <id>P25942</id>
        <label>CD40</label>
    </interactant>
    <organismsDiffer>false</organismsDiffer>
    <experiments>3</experiments>
</comment>
<comment type="interaction">
    <interactant intactId="EBI-10244198">
        <id>Q5J5C9</id>
    </interactant>
    <interactant intactId="EBI-11749983">
        <id>Q9UHP7-3</id>
        <label>CLEC2D</label>
    </interactant>
    <organismsDiffer>false</organismsDiffer>
    <experiments>3</experiments>
</comment>
<comment type="interaction">
    <interactant intactId="EBI-10244198">
        <id>Q5J5C9</id>
    </interactant>
    <interactant intactId="EBI-18304435">
        <id>Q5JX71</id>
        <label>FAM209A</label>
    </interactant>
    <organismsDiffer>false</organismsDiffer>
    <experiments>3</experiments>
</comment>
<comment type="interaction">
    <interactant intactId="EBI-10244198">
        <id>Q5J5C9</id>
    </interactant>
    <interactant intactId="EBI-17458373">
        <id>P48165</id>
        <label>GJA8</label>
    </interactant>
    <organismsDiffer>false</organismsDiffer>
    <experiments>3</experiments>
</comment>
<comment type="interaction">
    <interactant intactId="EBI-10244198">
        <id>Q5J5C9</id>
    </interactant>
    <interactant intactId="EBI-19045531">
        <id>Q6UWB1</id>
        <label>IL27RA</label>
    </interactant>
    <organismsDiffer>false</organismsDiffer>
    <experiments>3</experiments>
</comment>
<comment type="interaction">
    <interactant intactId="EBI-10244198">
        <id>Q5J5C9</id>
    </interactant>
    <interactant intactId="EBI-19944128">
        <id>Q6UX15-2</id>
        <label>LAYN</label>
    </interactant>
    <organismsDiffer>false</organismsDiffer>
    <experiments>3</experiments>
</comment>
<comment type="interaction">
    <interactant intactId="EBI-10244198">
        <id>Q5J5C9</id>
    </interactant>
    <interactant intactId="EBI-11304917">
        <id>Q8N386</id>
        <label>LRRC25</label>
    </interactant>
    <organismsDiffer>false</organismsDiffer>
    <experiments>3</experiments>
</comment>
<comment type="interaction">
    <interactant intactId="EBI-10244198">
        <id>Q5J5C9</id>
    </interactant>
    <interactant intactId="EBI-4314784">
        <id>Q96NY8</id>
        <label>NECTIN4</label>
    </interactant>
    <organismsDiffer>false</organismsDiffer>
    <experiments>3</experiments>
</comment>
<comment type="interaction">
    <interactant intactId="EBI-10244198">
        <id>Q5J5C9</id>
    </interactant>
    <interactant intactId="EBI-17280858">
        <id>Q8WWF3</id>
        <label>SSMEM1</label>
    </interactant>
    <organismsDiffer>false</organismsDiffer>
    <experiments>3</experiments>
</comment>
<comment type="interaction">
    <interactant intactId="EBI-10244198">
        <id>Q5J5C9</id>
    </interactant>
    <interactant intactId="EBI-7131783">
        <id>Q8N205</id>
        <label>SYNE4</label>
    </interactant>
    <organismsDiffer>false</organismsDiffer>
    <experiments>3</experiments>
</comment>
<comment type="subcellular location">
    <subcellularLocation>
        <location evidence="4">Secreted</location>
    </subcellularLocation>
</comment>
<comment type="tissue specificity">
    <text evidence="3">Abundant expression in the male reproductive tract only.</text>
</comment>
<comment type="similarity">
    <text evidence="4">Belongs to the beta-defensin family.</text>
</comment>